<dbReference type="EMBL" id="FO081769">
    <property type="protein sequence ID" value="CCD73423.1"/>
    <property type="molecule type" value="Genomic_DNA"/>
</dbReference>
<dbReference type="RefSeq" id="NP_490923.1">
    <property type="nucleotide sequence ID" value="NM_058522.5"/>
</dbReference>
<dbReference type="SMR" id="Q9GR61"/>
<dbReference type="BioGRID" id="37250">
    <property type="interactions" value="20"/>
</dbReference>
<dbReference type="ComplexPortal" id="CPX-2812">
    <property type="entry name" value="DNA-directed RNA polymerase III complex"/>
</dbReference>
<dbReference type="ComplexPortal" id="CPX-8913">
    <property type="entry name" value="DNA-directed RNA polymerase I complex"/>
</dbReference>
<dbReference type="FunCoup" id="Q9GR61">
    <property type="interactions" value="1573"/>
</dbReference>
<dbReference type="STRING" id="6239.Y37E3.3.1"/>
<dbReference type="PaxDb" id="6239-Y37E3.3"/>
<dbReference type="PeptideAtlas" id="Q9GR61"/>
<dbReference type="EnsemblMetazoa" id="Y37E3.3.1">
    <property type="protein sequence ID" value="Y37E3.3.1"/>
    <property type="gene ID" value="WBGene00021347"/>
</dbReference>
<dbReference type="GeneID" id="171763"/>
<dbReference type="KEGG" id="cel:CELE_Y37E3.3"/>
<dbReference type="AGR" id="WB:WBGene00021347"/>
<dbReference type="CTD" id="171763"/>
<dbReference type="WormBase" id="Y37E3.3">
    <property type="protein sequence ID" value="CE26662"/>
    <property type="gene ID" value="WBGene00021347"/>
    <property type="gene designation" value="rpb-10"/>
</dbReference>
<dbReference type="eggNOG" id="KOG3497">
    <property type="taxonomic scope" value="Eukaryota"/>
</dbReference>
<dbReference type="GeneTree" id="ENSGT00390000007087"/>
<dbReference type="HOGENOM" id="CLU_143122_1_1_1"/>
<dbReference type="InParanoid" id="Q9GR61"/>
<dbReference type="OMA" id="YCCRRMF"/>
<dbReference type="OrthoDB" id="10258858at2759"/>
<dbReference type="PhylomeDB" id="Q9GR61"/>
<dbReference type="Reactome" id="R-CEL-112382">
    <property type="pathway name" value="Formation of RNA Pol II elongation complex"/>
</dbReference>
<dbReference type="Reactome" id="R-CEL-113418">
    <property type="pathway name" value="Formation of the Early Elongation Complex"/>
</dbReference>
<dbReference type="Reactome" id="R-CEL-5250924">
    <property type="pathway name" value="B-WICH complex positively regulates rRNA expression"/>
</dbReference>
<dbReference type="Reactome" id="R-CEL-5578749">
    <property type="pathway name" value="Transcriptional regulation by small RNAs"/>
</dbReference>
<dbReference type="Reactome" id="R-CEL-674695">
    <property type="pathway name" value="RNA Polymerase II Pre-transcription Events"/>
</dbReference>
<dbReference type="Reactome" id="R-CEL-6781823">
    <property type="pathway name" value="Formation of TC-NER Pre-Incision Complex"/>
</dbReference>
<dbReference type="Reactome" id="R-CEL-6782135">
    <property type="pathway name" value="Dual incision in TC-NER"/>
</dbReference>
<dbReference type="Reactome" id="R-CEL-6782210">
    <property type="pathway name" value="Gap-filling DNA repair synthesis and ligation in TC-NER"/>
</dbReference>
<dbReference type="Reactome" id="R-CEL-6796648">
    <property type="pathway name" value="TP53 Regulates Transcription of DNA Repair Genes"/>
</dbReference>
<dbReference type="Reactome" id="R-CEL-6803529">
    <property type="pathway name" value="FGFR2 alternative splicing"/>
</dbReference>
<dbReference type="Reactome" id="R-CEL-6807505">
    <property type="pathway name" value="RNA polymerase II transcribes snRNA genes"/>
</dbReference>
<dbReference type="Reactome" id="R-CEL-72086">
    <property type="pathway name" value="mRNA Capping"/>
</dbReference>
<dbReference type="Reactome" id="R-CEL-72163">
    <property type="pathway name" value="mRNA Splicing - Major Pathway"/>
</dbReference>
<dbReference type="Reactome" id="R-CEL-72165">
    <property type="pathway name" value="mRNA Splicing - Minor Pathway"/>
</dbReference>
<dbReference type="Reactome" id="R-CEL-72203">
    <property type="pathway name" value="Processing of Capped Intron-Containing Pre-mRNA"/>
</dbReference>
<dbReference type="Reactome" id="R-CEL-73762">
    <property type="pathway name" value="RNA Polymerase I Transcription Initiation"/>
</dbReference>
<dbReference type="Reactome" id="R-CEL-73772">
    <property type="pathway name" value="RNA Polymerase I Promoter Escape"/>
</dbReference>
<dbReference type="Reactome" id="R-CEL-73776">
    <property type="pathway name" value="RNA Polymerase II Promoter Escape"/>
</dbReference>
<dbReference type="Reactome" id="R-CEL-73779">
    <property type="pathway name" value="RNA Polymerase II Transcription Pre-Initiation And Promoter Opening"/>
</dbReference>
<dbReference type="Reactome" id="R-CEL-75953">
    <property type="pathway name" value="RNA Polymerase II Transcription Initiation"/>
</dbReference>
<dbReference type="Reactome" id="R-CEL-75955">
    <property type="pathway name" value="RNA Polymerase II Transcription Elongation"/>
</dbReference>
<dbReference type="Reactome" id="R-CEL-76042">
    <property type="pathway name" value="RNA Polymerase II Transcription Initiation And Promoter Clearance"/>
</dbReference>
<dbReference type="Reactome" id="R-CEL-77075">
    <property type="pathway name" value="RNA Pol II CTD phosphorylation and interaction with CE"/>
</dbReference>
<dbReference type="Reactome" id="R-CEL-9018519">
    <property type="pathway name" value="Estrogen-dependent gene expression"/>
</dbReference>
<dbReference type="PRO" id="PR:Q9GR61"/>
<dbReference type="Proteomes" id="UP000001940">
    <property type="component" value="Chromosome I"/>
</dbReference>
<dbReference type="Bgee" id="WBGene00021347">
    <property type="expression patterns" value="Expressed in embryo and 4 other cell types or tissues"/>
</dbReference>
<dbReference type="GO" id="GO:0005736">
    <property type="term" value="C:RNA polymerase I complex"/>
    <property type="evidence" value="ECO:0000318"/>
    <property type="project" value="GO_Central"/>
</dbReference>
<dbReference type="GO" id="GO:0005665">
    <property type="term" value="C:RNA polymerase II, core complex"/>
    <property type="evidence" value="ECO:0000318"/>
    <property type="project" value="GO_Central"/>
</dbReference>
<dbReference type="GO" id="GO:0005666">
    <property type="term" value="C:RNA polymerase III complex"/>
    <property type="evidence" value="ECO:0000318"/>
    <property type="project" value="GO_Central"/>
</dbReference>
<dbReference type="GO" id="GO:0003677">
    <property type="term" value="F:DNA binding"/>
    <property type="evidence" value="ECO:0007669"/>
    <property type="project" value="InterPro"/>
</dbReference>
<dbReference type="GO" id="GO:0003899">
    <property type="term" value="F:DNA-directed RNA polymerase activity"/>
    <property type="evidence" value="ECO:0007669"/>
    <property type="project" value="InterPro"/>
</dbReference>
<dbReference type="GO" id="GO:0008270">
    <property type="term" value="F:zinc ion binding"/>
    <property type="evidence" value="ECO:0000318"/>
    <property type="project" value="GO_Central"/>
</dbReference>
<dbReference type="GO" id="GO:0006360">
    <property type="term" value="P:transcription by RNA polymerase I"/>
    <property type="evidence" value="ECO:0000318"/>
    <property type="project" value="GO_Central"/>
</dbReference>
<dbReference type="GO" id="GO:0006366">
    <property type="term" value="P:transcription by RNA polymerase II"/>
    <property type="evidence" value="ECO:0000318"/>
    <property type="project" value="GO_Central"/>
</dbReference>
<dbReference type="GO" id="GO:0042797">
    <property type="term" value="P:tRNA transcription by RNA polymerase III"/>
    <property type="evidence" value="ECO:0000318"/>
    <property type="project" value="GO_Central"/>
</dbReference>
<dbReference type="FunFam" id="1.10.10.60:FF:000024">
    <property type="entry name" value="DNA-directed RNA polymerases I, II, and III subunit"/>
    <property type="match status" value="1"/>
</dbReference>
<dbReference type="Gene3D" id="1.10.10.60">
    <property type="entry name" value="Homeodomain-like"/>
    <property type="match status" value="1"/>
</dbReference>
<dbReference type="HAMAP" id="MF_00250">
    <property type="entry name" value="RNApol_arch_Rpo10"/>
    <property type="match status" value="1"/>
</dbReference>
<dbReference type="InterPro" id="IPR023580">
    <property type="entry name" value="RNA_pol_su_RPB10"/>
</dbReference>
<dbReference type="InterPro" id="IPR020789">
    <property type="entry name" value="RNA_pol_suN_Zn-BS"/>
</dbReference>
<dbReference type="InterPro" id="IPR000268">
    <property type="entry name" value="RPABC5/Rpb10"/>
</dbReference>
<dbReference type="NCBIfam" id="NF003089">
    <property type="entry name" value="PRK04016.1"/>
    <property type="match status" value="1"/>
</dbReference>
<dbReference type="PANTHER" id="PTHR23431:SF3">
    <property type="entry name" value="DNA-DIRECTED RNA POLYMERASES I, II, AND III SUBUNIT RPABC5"/>
    <property type="match status" value="1"/>
</dbReference>
<dbReference type="PANTHER" id="PTHR23431">
    <property type="entry name" value="DNA-DIRECTED RNA POLYMERASES I, II, AND III SUBUNIT RPABC5 FAMILY MEMBER"/>
    <property type="match status" value="1"/>
</dbReference>
<dbReference type="Pfam" id="PF01194">
    <property type="entry name" value="RNA_pol_N"/>
    <property type="match status" value="1"/>
</dbReference>
<dbReference type="PIRSF" id="PIRSF005653">
    <property type="entry name" value="RNA_pol_N/8_sub"/>
    <property type="match status" value="1"/>
</dbReference>
<dbReference type="SUPFAM" id="SSF46924">
    <property type="entry name" value="RNA polymerase subunit RPB10"/>
    <property type="match status" value="1"/>
</dbReference>
<dbReference type="PROSITE" id="PS01112">
    <property type="entry name" value="RNA_POL_N_8KD"/>
    <property type="match status" value="1"/>
</dbReference>
<proteinExistence type="inferred from homology"/>
<keyword id="KW-0240">DNA-directed RNA polymerase</keyword>
<keyword id="KW-0479">Metal-binding</keyword>
<keyword id="KW-0539">Nucleus</keyword>
<keyword id="KW-1185">Reference proteome</keyword>
<keyword id="KW-0804">Transcription</keyword>
<keyword id="KW-0862">Zinc</keyword>
<feature type="chain" id="PRO_0000121335" description="DNA-directed RNA polymerases I, II, and III subunit RPABC5">
    <location>
        <begin position="1"/>
        <end position="67"/>
    </location>
</feature>
<feature type="binding site" evidence="1">
    <location>
        <position position="7"/>
    </location>
    <ligand>
        <name>Zn(2+)</name>
        <dbReference type="ChEBI" id="CHEBI:29105"/>
    </ligand>
</feature>
<feature type="binding site" evidence="1">
    <location>
        <position position="10"/>
    </location>
    <ligand>
        <name>Zn(2+)</name>
        <dbReference type="ChEBI" id="CHEBI:29105"/>
    </ligand>
</feature>
<feature type="binding site" evidence="1">
    <location>
        <position position="44"/>
    </location>
    <ligand>
        <name>Zn(2+)</name>
        <dbReference type="ChEBI" id="CHEBI:29105"/>
    </ligand>
</feature>
<feature type="binding site" evidence="1">
    <location>
        <position position="45"/>
    </location>
    <ligand>
        <name>Zn(2+)</name>
        <dbReference type="ChEBI" id="CHEBI:29105"/>
    </ligand>
</feature>
<evidence type="ECO:0000250" key="1"/>
<evidence type="ECO:0000305" key="2"/>
<accession>Q9GR61</accession>
<comment type="function">
    <text evidence="1">DNA-dependent RNA polymerase catalyzes the transcription of DNA into RNA using the four ribonucleoside triphosphates as substrates. Common component of RNA polymerases I, II and III which synthesize ribosomal RNA precursors, mRNA precursors and many functional non-coding RNAs, and a small RNAs, such as 5S rRNA and tRNAs, respectively. Pol II is the central component of the basal RNA polymerase II transcription machinery. Pols are composed of mobile elements that move relative to each other. In Pol II, RBP10 is part of the core element with the central large cleft (By similarity).</text>
</comment>
<comment type="subunit">
    <text evidence="1">Component of the RNA polymerase I (Pol I), RNA polymerase II (Pol II) and RNA polymerase III (Pol III) complexes consisting of at least 13, 12 and 17 subunits, respectively.</text>
</comment>
<comment type="subcellular location">
    <subcellularLocation>
        <location evidence="1">Nucleus</location>
    </subcellularLocation>
</comment>
<comment type="similarity">
    <text evidence="2">Belongs to the archaeal Rpo10/eukaryotic RPB10 RNA polymerase subunit family.</text>
</comment>
<organism>
    <name type="scientific">Caenorhabditis elegans</name>
    <dbReference type="NCBI Taxonomy" id="6239"/>
    <lineage>
        <taxon>Eukaryota</taxon>
        <taxon>Metazoa</taxon>
        <taxon>Ecdysozoa</taxon>
        <taxon>Nematoda</taxon>
        <taxon>Chromadorea</taxon>
        <taxon>Rhabditida</taxon>
        <taxon>Rhabditina</taxon>
        <taxon>Rhabditomorpha</taxon>
        <taxon>Rhabditoidea</taxon>
        <taxon>Rhabditidae</taxon>
        <taxon>Peloderinae</taxon>
        <taxon>Caenorhabditis</taxon>
    </lineage>
</organism>
<reference key="1">
    <citation type="journal article" date="1998" name="Science">
        <title>Genome sequence of the nematode C. elegans: a platform for investigating biology.</title>
        <authorList>
            <consortium name="The C. elegans sequencing consortium"/>
        </authorList>
    </citation>
    <scope>NUCLEOTIDE SEQUENCE [LARGE SCALE GENOMIC DNA]</scope>
    <source>
        <strain>Bristol N2</strain>
    </source>
</reference>
<name>RPAB5_CAEEL</name>
<sequence>MIIPIRCFTCGKVIGDKWETYLGFLQSEYSEGDALDALGLRRYCCRRMLLAHVDLIEKLLNYHPLEK</sequence>
<gene>
    <name type="primary">rpb-10</name>
    <name type="ORF">Y37E3.3</name>
</gene>
<protein>
    <recommendedName>
        <fullName>DNA-directed RNA polymerases I, II, and III subunit RPABC5</fullName>
        <shortName>RNA polymerases I, II, and III subunit ABC5</shortName>
    </recommendedName>
</protein>